<reference key="1">
    <citation type="journal article" date="2012" name="BMC Genomics">
        <title>Comparative genomics and transcriptomics of lineages I, II, and III strains of Listeria monocytogenes.</title>
        <authorList>
            <person name="Hain T."/>
            <person name="Ghai R."/>
            <person name="Billion A."/>
            <person name="Kuenne C.T."/>
            <person name="Steinweg C."/>
            <person name="Izar B."/>
            <person name="Mohamed W."/>
            <person name="Mraheil M."/>
            <person name="Domann E."/>
            <person name="Schaffrath S."/>
            <person name="Karst U."/>
            <person name="Goesmann A."/>
            <person name="Oehm S."/>
            <person name="Puhler A."/>
            <person name="Merkl R."/>
            <person name="Vorwerk S."/>
            <person name="Glaser P."/>
            <person name="Garrido P."/>
            <person name="Rusniok C."/>
            <person name="Buchrieser C."/>
            <person name="Goebel W."/>
            <person name="Chakraborty T."/>
        </authorList>
    </citation>
    <scope>NUCLEOTIDE SEQUENCE [LARGE SCALE GENOMIC DNA]</scope>
    <source>
        <strain>CLIP80459</strain>
    </source>
</reference>
<keyword id="KW-0963">Cytoplasm</keyword>
<keyword id="KW-0275">Fatty acid biosynthesis</keyword>
<keyword id="KW-0276">Fatty acid metabolism</keyword>
<keyword id="KW-0444">Lipid biosynthesis</keyword>
<keyword id="KW-0443">Lipid metabolism</keyword>
<keyword id="KW-0460">Magnesium</keyword>
<keyword id="KW-0479">Metal-binding</keyword>
<keyword id="KW-0808">Transferase</keyword>
<accession>C1L1F5</accession>
<organism>
    <name type="scientific">Listeria monocytogenes serotype 4b (strain CLIP80459)</name>
    <dbReference type="NCBI Taxonomy" id="568819"/>
    <lineage>
        <taxon>Bacteria</taxon>
        <taxon>Bacillati</taxon>
        <taxon>Bacillota</taxon>
        <taxon>Bacilli</taxon>
        <taxon>Bacillales</taxon>
        <taxon>Listeriaceae</taxon>
        <taxon>Listeria</taxon>
    </lineage>
</organism>
<evidence type="ECO:0000255" key="1">
    <source>
        <dbReference type="HAMAP-Rule" id="MF_00101"/>
    </source>
</evidence>
<sequence length="118" mass="13257">MIKGIGLDMIDLERVKQVVEKNPRFIERVLTEKEIKQFEKYEGNRKIEFLAGRFAAKEAYAKANGTGFGKHLSFTDVEILQVEDGRPHVTLPVKSGENVFVSITHTARSAAAQVIIEI</sequence>
<feature type="chain" id="PRO_1000202799" description="Holo-[acyl-carrier-protein] synthase">
    <location>
        <begin position="1"/>
        <end position="118"/>
    </location>
</feature>
<feature type="binding site" evidence="1">
    <location>
        <position position="8"/>
    </location>
    <ligand>
        <name>Mg(2+)</name>
        <dbReference type="ChEBI" id="CHEBI:18420"/>
    </ligand>
</feature>
<feature type="binding site" evidence="1">
    <location>
        <position position="58"/>
    </location>
    <ligand>
        <name>Mg(2+)</name>
        <dbReference type="ChEBI" id="CHEBI:18420"/>
    </ligand>
</feature>
<proteinExistence type="inferred from homology"/>
<comment type="function">
    <text evidence="1">Transfers the 4'-phosphopantetheine moiety from coenzyme A to a Ser of acyl-carrier-protein.</text>
</comment>
<comment type="catalytic activity">
    <reaction evidence="1">
        <text>apo-[ACP] + CoA = holo-[ACP] + adenosine 3',5'-bisphosphate + H(+)</text>
        <dbReference type="Rhea" id="RHEA:12068"/>
        <dbReference type="Rhea" id="RHEA-COMP:9685"/>
        <dbReference type="Rhea" id="RHEA-COMP:9690"/>
        <dbReference type="ChEBI" id="CHEBI:15378"/>
        <dbReference type="ChEBI" id="CHEBI:29999"/>
        <dbReference type="ChEBI" id="CHEBI:57287"/>
        <dbReference type="ChEBI" id="CHEBI:58343"/>
        <dbReference type="ChEBI" id="CHEBI:64479"/>
        <dbReference type="EC" id="2.7.8.7"/>
    </reaction>
</comment>
<comment type="cofactor">
    <cofactor evidence="1">
        <name>Mg(2+)</name>
        <dbReference type="ChEBI" id="CHEBI:18420"/>
    </cofactor>
</comment>
<comment type="subcellular location">
    <subcellularLocation>
        <location evidence="1">Cytoplasm</location>
    </subcellularLocation>
</comment>
<comment type="similarity">
    <text evidence="1">Belongs to the P-Pant transferase superfamily. AcpS family.</text>
</comment>
<protein>
    <recommendedName>
        <fullName evidence="1">Holo-[acyl-carrier-protein] synthase</fullName>
        <shortName evidence="1">Holo-ACP synthase</shortName>
        <ecNumber evidence="1">2.7.8.7</ecNumber>
    </recommendedName>
    <alternativeName>
        <fullName evidence="1">4'-phosphopantetheinyl transferase AcpS</fullName>
    </alternativeName>
</protein>
<gene>
    <name evidence="1" type="primary">acpS</name>
    <name type="ordered locus">Lm4b_00903</name>
</gene>
<dbReference type="EC" id="2.7.8.7" evidence="1"/>
<dbReference type="EMBL" id="FM242711">
    <property type="protein sequence ID" value="CAS04670.1"/>
    <property type="molecule type" value="Genomic_DNA"/>
</dbReference>
<dbReference type="RefSeq" id="WP_003721452.1">
    <property type="nucleotide sequence ID" value="NC_012488.1"/>
</dbReference>
<dbReference type="SMR" id="C1L1F5"/>
<dbReference type="KEGG" id="lmc:Lm4b_00903"/>
<dbReference type="HOGENOM" id="CLU_089696_1_2_9"/>
<dbReference type="GO" id="GO:0005737">
    <property type="term" value="C:cytoplasm"/>
    <property type="evidence" value="ECO:0007669"/>
    <property type="project" value="UniProtKB-SubCell"/>
</dbReference>
<dbReference type="GO" id="GO:0008897">
    <property type="term" value="F:holo-[acyl-carrier-protein] synthase activity"/>
    <property type="evidence" value="ECO:0007669"/>
    <property type="project" value="UniProtKB-UniRule"/>
</dbReference>
<dbReference type="GO" id="GO:0000287">
    <property type="term" value="F:magnesium ion binding"/>
    <property type="evidence" value="ECO:0007669"/>
    <property type="project" value="UniProtKB-UniRule"/>
</dbReference>
<dbReference type="GO" id="GO:0006633">
    <property type="term" value="P:fatty acid biosynthetic process"/>
    <property type="evidence" value="ECO:0007669"/>
    <property type="project" value="UniProtKB-UniRule"/>
</dbReference>
<dbReference type="Gene3D" id="3.90.470.20">
    <property type="entry name" value="4'-phosphopantetheinyl transferase domain"/>
    <property type="match status" value="1"/>
</dbReference>
<dbReference type="HAMAP" id="MF_00101">
    <property type="entry name" value="AcpS"/>
    <property type="match status" value="1"/>
</dbReference>
<dbReference type="InterPro" id="IPR008278">
    <property type="entry name" value="4-PPantetheinyl_Trfase_dom"/>
</dbReference>
<dbReference type="InterPro" id="IPR037143">
    <property type="entry name" value="4-PPantetheinyl_Trfase_dom_sf"/>
</dbReference>
<dbReference type="InterPro" id="IPR002582">
    <property type="entry name" value="ACPS"/>
</dbReference>
<dbReference type="InterPro" id="IPR004568">
    <property type="entry name" value="Ppantetheine-prot_Trfase_dom"/>
</dbReference>
<dbReference type="NCBIfam" id="TIGR00516">
    <property type="entry name" value="acpS"/>
    <property type="match status" value="1"/>
</dbReference>
<dbReference type="NCBIfam" id="TIGR00556">
    <property type="entry name" value="pantethn_trn"/>
    <property type="match status" value="1"/>
</dbReference>
<dbReference type="Pfam" id="PF01648">
    <property type="entry name" value="ACPS"/>
    <property type="match status" value="1"/>
</dbReference>
<dbReference type="SUPFAM" id="SSF56214">
    <property type="entry name" value="4'-phosphopantetheinyl transferase"/>
    <property type="match status" value="1"/>
</dbReference>
<name>ACPS_LISMC</name>